<comment type="function">
    <text evidence="1">One of two assembly initiator proteins, it binds directly to the 5'-end of the 23S rRNA, where it nucleates assembly of the 50S subunit.</text>
</comment>
<comment type="function">
    <text evidence="1">One of the proteins that surrounds the polypeptide exit tunnel on the outside of the subunit.</text>
</comment>
<comment type="subunit">
    <text evidence="1">Part of the 50S ribosomal subunit.</text>
</comment>
<comment type="similarity">
    <text evidence="1">Belongs to the universal ribosomal protein uL24 family.</text>
</comment>
<feature type="chain" id="PRO_1000052177" description="Large ribosomal subunit protein uL24">
    <location>
        <begin position="1"/>
        <end position="106"/>
    </location>
</feature>
<proteinExistence type="inferred from homology"/>
<accession>Q0ABG4</accession>
<name>RL24_ALKEH</name>
<reference key="1">
    <citation type="submission" date="2006-08" db="EMBL/GenBank/DDBJ databases">
        <title>Complete sequence of Alkalilimnicola ehrilichei MLHE-1.</title>
        <authorList>
            <person name="Copeland A."/>
            <person name="Lucas S."/>
            <person name="Lapidus A."/>
            <person name="Barry K."/>
            <person name="Detter J.C."/>
            <person name="Glavina del Rio T."/>
            <person name="Hammon N."/>
            <person name="Israni S."/>
            <person name="Dalin E."/>
            <person name="Tice H."/>
            <person name="Pitluck S."/>
            <person name="Sims D."/>
            <person name="Brettin T."/>
            <person name="Bruce D."/>
            <person name="Han C."/>
            <person name="Tapia R."/>
            <person name="Gilna P."/>
            <person name="Schmutz J."/>
            <person name="Larimer F."/>
            <person name="Land M."/>
            <person name="Hauser L."/>
            <person name="Kyrpides N."/>
            <person name="Mikhailova N."/>
            <person name="Oremland R.S."/>
            <person name="Hoeft S.E."/>
            <person name="Switzer-Blum J."/>
            <person name="Kulp T."/>
            <person name="King G."/>
            <person name="Tabita R."/>
            <person name="Witte B."/>
            <person name="Santini J.M."/>
            <person name="Basu P."/>
            <person name="Hollibaugh J.T."/>
            <person name="Xie G."/>
            <person name="Stolz J.F."/>
            <person name="Richardson P."/>
        </authorList>
    </citation>
    <scope>NUCLEOTIDE SEQUENCE [LARGE SCALE GENOMIC DNA]</scope>
    <source>
        <strain>ATCC BAA-1101 / DSM 17681 / MLHE-1</strain>
    </source>
</reference>
<keyword id="KW-1185">Reference proteome</keyword>
<keyword id="KW-0687">Ribonucleoprotein</keyword>
<keyword id="KW-0689">Ribosomal protein</keyword>
<keyword id="KW-0694">RNA-binding</keyword>
<keyword id="KW-0699">rRNA-binding</keyword>
<sequence>MRKIRQGDDVVIIAGKDKGRRGRVIRVYPDQEKLLVENVNVVKRHRKGNPQQGEAGGIIEQEKPIHQSNVALYNPATEKGDRVGIRVLEDGSKARYFKSNNELVDG</sequence>
<organism>
    <name type="scientific">Alkalilimnicola ehrlichii (strain ATCC BAA-1101 / DSM 17681 / MLHE-1)</name>
    <dbReference type="NCBI Taxonomy" id="187272"/>
    <lineage>
        <taxon>Bacteria</taxon>
        <taxon>Pseudomonadati</taxon>
        <taxon>Pseudomonadota</taxon>
        <taxon>Gammaproteobacteria</taxon>
        <taxon>Chromatiales</taxon>
        <taxon>Ectothiorhodospiraceae</taxon>
        <taxon>Alkalilimnicola</taxon>
    </lineage>
</organism>
<gene>
    <name evidence="1" type="primary">rplX</name>
    <name type="ordered locus">Mlg_0469</name>
</gene>
<dbReference type="EMBL" id="CP000453">
    <property type="protein sequence ID" value="ABI55823.1"/>
    <property type="molecule type" value="Genomic_DNA"/>
</dbReference>
<dbReference type="RefSeq" id="WP_011628218.1">
    <property type="nucleotide sequence ID" value="NC_008340.1"/>
</dbReference>
<dbReference type="SMR" id="Q0ABG4"/>
<dbReference type="KEGG" id="aeh:Mlg_0469"/>
<dbReference type="eggNOG" id="COG0198">
    <property type="taxonomic scope" value="Bacteria"/>
</dbReference>
<dbReference type="HOGENOM" id="CLU_093315_2_2_6"/>
<dbReference type="OrthoDB" id="9807419at2"/>
<dbReference type="Proteomes" id="UP000001962">
    <property type="component" value="Chromosome"/>
</dbReference>
<dbReference type="GO" id="GO:1990904">
    <property type="term" value="C:ribonucleoprotein complex"/>
    <property type="evidence" value="ECO:0007669"/>
    <property type="project" value="UniProtKB-KW"/>
</dbReference>
<dbReference type="GO" id="GO:0005840">
    <property type="term" value="C:ribosome"/>
    <property type="evidence" value="ECO:0007669"/>
    <property type="project" value="UniProtKB-KW"/>
</dbReference>
<dbReference type="GO" id="GO:0019843">
    <property type="term" value="F:rRNA binding"/>
    <property type="evidence" value="ECO:0007669"/>
    <property type="project" value="UniProtKB-UniRule"/>
</dbReference>
<dbReference type="GO" id="GO:0003735">
    <property type="term" value="F:structural constituent of ribosome"/>
    <property type="evidence" value="ECO:0007669"/>
    <property type="project" value="InterPro"/>
</dbReference>
<dbReference type="GO" id="GO:0006412">
    <property type="term" value="P:translation"/>
    <property type="evidence" value="ECO:0007669"/>
    <property type="project" value="UniProtKB-UniRule"/>
</dbReference>
<dbReference type="CDD" id="cd06089">
    <property type="entry name" value="KOW_RPL26"/>
    <property type="match status" value="1"/>
</dbReference>
<dbReference type="FunFam" id="2.30.30.30:FF:000004">
    <property type="entry name" value="50S ribosomal protein L24"/>
    <property type="match status" value="1"/>
</dbReference>
<dbReference type="Gene3D" id="2.30.30.30">
    <property type="match status" value="1"/>
</dbReference>
<dbReference type="HAMAP" id="MF_01326_B">
    <property type="entry name" value="Ribosomal_uL24_B"/>
    <property type="match status" value="1"/>
</dbReference>
<dbReference type="InterPro" id="IPR005824">
    <property type="entry name" value="KOW"/>
</dbReference>
<dbReference type="InterPro" id="IPR014722">
    <property type="entry name" value="Rib_uL2_dom2"/>
</dbReference>
<dbReference type="InterPro" id="IPR003256">
    <property type="entry name" value="Ribosomal_uL24"/>
</dbReference>
<dbReference type="InterPro" id="IPR005825">
    <property type="entry name" value="Ribosomal_uL24_CS"/>
</dbReference>
<dbReference type="InterPro" id="IPR041988">
    <property type="entry name" value="Ribosomal_uL24_KOW"/>
</dbReference>
<dbReference type="InterPro" id="IPR008991">
    <property type="entry name" value="Translation_prot_SH3-like_sf"/>
</dbReference>
<dbReference type="NCBIfam" id="TIGR01079">
    <property type="entry name" value="rplX_bact"/>
    <property type="match status" value="1"/>
</dbReference>
<dbReference type="PANTHER" id="PTHR12903">
    <property type="entry name" value="MITOCHONDRIAL RIBOSOMAL PROTEIN L24"/>
    <property type="match status" value="1"/>
</dbReference>
<dbReference type="Pfam" id="PF00467">
    <property type="entry name" value="KOW"/>
    <property type="match status" value="1"/>
</dbReference>
<dbReference type="Pfam" id="PF17136">
    <property type="entry name" value="ribosomal_L24"/>
    <property type="match status" value="1"/>
</dbReference>
<dbReference type="SMART" id="SM00739">
    <property type="entry name" value="KOW"/>
    <property type="match status" value="1"/>
</dbReference>
<dbReference type="SUPFAM" id="SSF50104">
    <property type="entry name" value="Translation proteins SH3-like domain"/>
    <property type="match status" value="1"/>
</dbReference>
<dbReference type="PROSITE" id="PS01108">
    <property type="entry name" value="RIBOSOMAL_L24"/>
    <property type="match status" value="1"/>
</dbReference>
<protein>
    <recommendedName>
        <fullName evidence="1">Large ribosomal subunit protein uL24</fullName>
    </recommendedName>
    <alternativeName>
        <fullName evidence="2">50S ribosomal protein L24</fullName>
    </alternativeName>
</protein>
<evidence type="ECO:0000255" key="1">
    <source>
        <dbReference type="HAMAP-Rule" id="MF_01326"/>
    </source>
</evidence>
<evidence type="ECO:0000305" key="2"/>